<accession>Q6F0G9</accession>
<dbReference type="EC" id="6.3.4.2" evidence="1"/>
<dbReference type="EMBL" id="AE017263">
    <property type="protein sequence ID" value="AAT76004.1"/>
    <property type="molecule type" value="Genomic_DNA"/>
</dbReference>
<dbReference type="RefSeq" id="WP_011183544.1">
    <property type="nucleotide sequence ID" value="NC_006055.1"/>
</dbReference>
<dbReference type="RefSeq" id="YP_053888.1">
    <property type="nucleotide sequence ID" value="NC_006055.1"/>
</dbReference>
<dbReference type="SMR" id="Q6F0G9"/>
<dbReference type="STRING" id="265311.Mfl648"/>
<dbReference type="PaxDb" id="265311-Mfl648"/>
<dbReference type="EnsemblBacteria" id="AAT76004">
    <property type="protein sequence ID" value="AAT76004"/>
    <property type="gene ID" value="Mfl648"/>
</dbReference>
<dbReference type="GeneID" id="2897710"/>
<dbReference type="KEGG" id="mfl:Mfl648"/>
<dbReference type="PATRIC" id="fig|265311.5.peg.650"/>
<dbReference type="eggNOG" id="COG0504">
    <property type="taxonomic scope" value="Bacteria"/>
</dbReference>
<dbReference type="HOGENOM" id="CLU_011675_5_0_14"/>
<dbReference type="OrthoDB" id="9801107at2"/>
<dbReference type="UniPathway" id="UPA00159">
    <property type="reaction ID" value="UER00277"/>
</dbReference>
<dbReference type="Proteomes" id="UP000006647">
    <property type="component" value="Chromosome"/>
</dbReference>
<dbReference type="GO" id="GO:0005829">
    <property type="term" value="C:cytosol"/>
    <property type="evidence" value="ECO:0007669"/>
    <property type="project" value="TreeGrafter"/>
</dbReference>
<dbReference type="GO" id="GO:0005524">
    <property type="term" value="F:ATP binding"/>
    <property type="evidence" value="ECO:0007669"/>
    <property type="project" value="UniProtKB-KW"/>
</dbReference>
<dbReference type="GO" id="GO:0003883">
    <property type="term" value="F:CTP synthase activity"/>
    <property type="evidence" value="ECO:0007669"/>
    <property type="project" value="UniProtKB-UniRule"/>
</dbReference>
<dbReference type="GO" id="GO:0004359">
    <property type="term" value="F:glutaminase activity"/>
    <property type="evidence" value="ECO:0007669"/>
    <property type="project" value="RHEA"/>
</dbReference>
<dbReference type="GO" id="GO:0042802">
    <property type="term" value="F:identical protein binding"/>
    <property type="evidence" value="ECO:0007669"/>
    <property type="project" value="TreeGrafter"/>
</dbReference>
<dbReference type="GO" id="GO:0046872">
    <property type="term" value="F:metal ion binding"/>
    <property type="evidence" value="ECO:0007669"/>
    <property type="project" value="UniProtKB-KW"/>
</dbReference>
<dbReference type="GO" id="GO:0044210">
    <property type="term" value="P:'de novo' CTP biosynthetic process"/>
    <property type="evidence" value="ECO:0007669"/>
    <property type="project" value="UniProtKB-UniRule"/>
</dbReference>
<dbReference type="GO" id="GO:0019856">
    <property type="term" value="P:pyrimidine nucleobase biosynthetic process"/>
    <property type="evidence" value="ECO:0007669"/>
    <property type="project" value="TreeGrafter"/>
</dbReference>
<dbReference type="CDD" id="cd03113">
    <property type="entry name" value="CTPS_N"/>
    <property type="match status" value="1"/>
</dbReference>
<dbReference type="CDD" id="cd01746">
    <property type="entry name" value="GATase1_CTP_Synthase"/>
    <property type="match status" value="1"/>
</dbReference>
<dbReference type="FunFam" id="3.40.50.300:FF:000009">
    <property type="entry name" value="CTP synthase"/>
    <property type="match status" value="1"/>
</dbReference>
<dbReference type="FunFam" id="3.40.50.880:FF:000002">
    <property type="entry name" value="CTP synthase"/>
    <property type="match status" value="1"/>
</dbReference>
<dbReference type="Gene3D" id="3.40.50.880">
    <property type="match status" value="1"/>
</dbReference>
<dbReference type="Gene3D" id="3.40.50.300">
    <property type="entry name" value="P-loop containing nucleotide triphosphate hydrolases"/>
    <property type="match status" value="1"/>
</dbReference>
<dbReference type="HAMAP" id="MF_01227">
    <property type="entry name" value="PyrG"/>
    <property type="match status" value="1"/>
</dbReference>
<dbReference type="InterPro" id="IPR029062">
    <property type="entry name" value="Class_I_gatase-like"/>
</dbReference>
<dbReference type="InterPro" id="IPR004468">
    <property type="entry name" value="CTP_synthase"/>
</dbReference>
<dbReference type="InterPro" id="IPR017456">
    <property type="entry name" value="CTP_synthase_N"/>
</dbReference>
<dbReference type="InterPro" id="IPR017926">
    <property type="entry name" value="GATASE"/>
</dbReference>
<dbReference type="InterPro" id="IPR033828">
    <property type="entry name" value="GATase1_CTP_Synthase"/>
</dbReference>
<dbReference type="InterPro" id="IPR027417">
    <property type="entry name" value="P-loop_NTPase"/>
</dbReference>
<dbReference type="NCBIfam" id="NF003792">
    <property type="entry name" value="PRK05380.1"/>
    <property type="match status" value="1"/>
</dbReference>
<dbReference type="NCBIfam" id="TIGR00337">
    <property type="entry name" value="PyrG"/>
    <property type="match status" value="1"/>
</dbReference>
<dbReference type="PANTHER" id="PTHR11550">
    <property type="entry name" value="CTP SYNTHASE"/>
    <property type="match status" value="1"/>
</dbReference>
<dbReference type="PANTHER" id="PTHR11550:SF0">
    <property type="entry name" value="CTP SYNTHASE-RELATED"/>
    <property type="match status" value="1"/>
</dbReference>
<dbReference type="Pfam" id="PF06418">
    <property type="entry name" value="CTP_synth_N"/>
    <property type="match status" value="1"/>
</dbReference>
<dbReference type="Pfam" id="PF00117">
    <property type="entry name" value="GATase"/>
    <property type="match status" value="1"/>
</dbReference>
<dbReference type="SUPFAM" id="SSF52317">
    <property type="entry name" value="Class I glutamine amidotransferase-like"/>
    <property type="match status" value="1"/>
</dbReference>
<dbReference type="SUPFAM" id="SSF52540">
    <property type="entry name" value="P-loop containing nucleoside triphosphate hydrolases"/>
    <property type="match status" value="1"/>
</dbReference>
<dbReference type="PROSITE" id="PS51273">
    <property type="entry name" value="GATASE_TYPE_1"/>
    <property type="match status" value="1"/>
</dbReference>
<comment type="function">
    <text evidence="1">Catalyzes the ATP-dependent amination of UTP to CTP with either L-glutamine or ammonia as the source of nitrogen. Regulates intracellular CTP levels through interactions with the four ribonucleotide triphosphates.</text>
</comment>
<comment type="catalytic activity">
    <reaction evidence="1">
        <text>UTP + L-glutamine + ATP + H2O = CTP + L-glutamate + ADP + phosphate + 2 H(+)</text>
        <dbReference type="Rhea" id="RHEA:26426"/>
        <dbReference type="ChEBI" id="CHEBI:15377"/>
        <dbReference type="ChEBI" id="CHEBI:15378"/>
        <dbReference type="ChEBI" id="CHEBI:29985"/>
        <dbReference type="ChEBI" id="CHEBI:30616"/>
        <dbReference type="ChEBI" id="CHEBI:37563"/>
        <dbReference type="ChEBI" id="CHEBI:43474"/>
        <dbReference type="ChEBI" id="CHEBI:46398"/>
        <dbReference type="ChEBI" id="CHEBI:58359"/>
        <dbReference type="ChEBI" id="CHEBI:456216"/>
        <dbReference type="EC" id="6.3.4.2"/>
    </reaction>
</comment>
<comment type="catalytic activity">
    <reaction evidence="1">
        <text>L-glutamine + H2O = L-glutamate + NH4(+)</text>
        <dbReference type="Rhea" id="RHEA:15889"/>
        <dbReference type="ChEBI" id="CHEBI:15377"/>
        <dbReference type="ChEBI" id="CHEBI:28938"/>
        <dbReference type="ChEBI" id="CHEBI:29985"/>
        <dbReference type="ChEBI" id="CHEBI:58359"/>
    </reaction>
</comment>
<comment type="catalytic activity">
    <reaction evidence="1">
        <text>UTP + NH4(+) + ATP = CTP + ADP + phosphate + 2 H(+)</text>
        <dbReference type="Rhea" id="RHEA:16597"/>
        <dbReference type="ChEBI" id="CHEBI:15378"/>
        <dbReference type="ChEBI" id="CHEBI:28938"/>
        <dbReference type="ChEBI" id="CHEBI:30616"/>
        <dbReference type="ChEBI" id="CHEBI:37563"/>
        <dbReference type="ChEBI" id="CHEBI:43474"/>
        <dbReference type="ChEBI" id="CHEBI:46398"/>
        <dbReference type="ChEBI" id="CHEBI:456216"/>
    </reaction>
</comment>
<comment type="activity regulation">
    <text evidence="1">Allosterically activated by GTP, when glutamine is the substrate; GTP has no effect on the reaction when ammonia is the substrate. The allosteric effector GTP functions by stabilizing the protein conformation that binds the tetrahedral intermediate(s) formed during glutamine hydrolysis. Inhibited by the product CTP, via allosteric rather than competitive inhibition.</text>
</comment>
<comment type="pathway">
    <text evidence="1">Pyrimidine metabolism; CTP biosynthesis via de novo pathway; CTP from UDP: step 2/2.</text>
</comment>
<comment type="subunit">
    <text evidence="1">Homotetramer.</text>
</comment>
<comment type="miscellaneous">
    <text evidence="1">CTPSs have evolved a hybrid strategy for distinguishing between UTP and CTP. The overlapping regions of the product feedback inhibitory and substrate sites recognize a common feature in both compounds, the triphosphate moiety. To differentiate isosteric substrate and product pyrimidine rings, an additional pocket far from the expected kinase/ligase catalytic site, specifically recognizes the cytosine and ribose portions of the product inhibitor.</text>
</comment>
<comment type="similarity">
    <text evidence="1">Belongs to the CTP synthase family.</text>
</comment>
<organism>
    <name type="scientific">Mesoplasma florum (strain ATCC 33453 / NBRC 100688 / NCTC 11704 / L1)</name>
    <name type="common">Acholeplasma florum</name>
    <dbReference type="NCBI Taxonomy" id="265311"/>
    <lineage>
        <taxon>Bacteria</taxon>
        <taxon>Bacillati</taxon>
        <taxon>Mycoplasmatota</taxon>
        <taxon>Mollicutes</taxon>
        <taxon>Entomoplasmatales</taxon>
        <taxon>Entomoplasmataceae</taxon>
        <taxon>Mesoplasma</taxon>
    </lineage>
</organism>
<reference key="1">
    <citation type="submission" date="2004-06" db="EMBL/GenBank/DDBJ databases">
        <authorList>
            <person name="Birren B.W."/>
            <person name="Stange-Thomann N."/>
            <person name="Hafez N."/>
            <person name="DeCaprio D."/>
            <person name="Fisher S."/>
            <person name="Butler J."/>
            <person name="Elkins T."/>
            <person name="Kodira C.D."/>
            <person name="Major J."/>
            <person name="Wang S."/>
            <person name="Nicol R."/>
            <person name="Nusbaum C."/>
        </authorList>
    </citation>
    <scope>NUCLEOTIDE SEQUENCE [LARGE SCALE GENOMIC DNA]</scope>
    <source>
        <strain>ATCC 33453 / NBRC 100688 / NCTC 11704 / L1</strain>
    </source>
</reference>
<sequence length="532" mass="59883">MAKFVFVTGGVVSGLGKGITASSLGNLLKASGLKVFMQKFDPYLNVDPGTMSPYQHGEVFVTDDGGETDLDLGHYERFIDEKLTKMSSTSAGKIYLETINAERRGDWGGQTIQVVPHITDSIKNKVYQAAKTSGADVIISEIGGTVGDIESQPFIEAIRQIRMEQGKENVVFIHVALLLYLNASKEYKTKPIQMSVKELLSLGIQPDIIVQRTDKHSSKEIKEKISLFCNIPTSNVIDAIDKESIYEVPLEMYEQNLHGLVLDQLQIRTKKTDMESWIKFCEKIKASKEEFEVTFVGKYIELQDAYLSVIESLKIAGYEFKRKLKINWIQADKLNESNYKEVLQNAKGILVPGGFGDRGIEGMILASKFARENSIPYLGICLGMQIATISIARDWLNLPEANSTEFDHSGAVPIFDFIRGIDVQNLGGTLRLGAFYKTTIKEGTKAEKLYGSREVFERHRHRYEFNNEYKKALEEKGLVFSGIYEEKKLVEIIELPNHPFFVGSQYHPEFTSRPNKPNPLFKGFVEAIVNNK</sequence>
<proteinExistence type="inferred from homology"/>
<evidence type="ECO:0000255" key="1">
    <source>
        <dbReference type="HAMAP-Rule" id="MF_01227"/>
    </source>
</evidence>
<name>PYRG_MESFL</name>
<protein>
    <recommendedName>
        <fullName evidence="1">CTP synthase</fullName>
        <ecNumber evidence="1">6.3.4.2</ecNumber>
    </recommendedName>
    <alternativeName>
        <fullName evidence="1">Cytidine 5'-triphosphate synthase</fullName>
    </alternativeName>
    <alternativeName>
        <fullName evidence="1">Cytidine triphosphate synthetase</fullName>
        <shortName evidence="1">CTP synthetase</shortName>
        <shortName evidence="1">CTPS</shortName>
    </alternativeName>
    <alternativeName>
        <fullName evidence="1">UTP--ammonia ligase</fullName>
    </alternativeName>
</protein>
<feature type="chain" id="PRO_0000266151" description="CTP synthase">
    <location>
        <begin position="1"/>
        <end position="532"/>
    </location>
</feature>
<feature type="domain" description="Glutamine amidotransferase type-1" evidence="1">
    <location>
        <begin position="292"/>
        <end position="532"/>
    </location>
</feature>
<feature type="region of interest" description="Amidoligase domain" evidence="1">
    <location>
        <begin position="1"/>
        <end position="267"/>
    </location>
</feature>
<feature type="active site" description="Nucleophile; for glutamine hydrolysis" evidence="1">
    <location>
        <position position="381"/>
    </location>
</feature>
<feature type="active site" evidence="1">
    <location>
        <position position="507"/>
    </location>
</feature>
<feature type="active site" evidence="1">
    <location>
        <position position="509"/>
    </location>
</feature>
<feature type="binding site" evidence="1">
    <location>
        <position position="13"/>
    </location>
    <ligand>
        <name>CTP</name>
        <dbReference type="ChEBI" id="CHEBI:37563"/>
        <note>allosteric inhibitor</note>
    </ligand>
</feature>
<feature type="binding site" evidence="1">
    <location>
        <position position="13"/>
    </location>
    <ligand>
        <name>UTP</name>
        <dbReference type="ChEBI" id="CHEBI:46398"/>
    </ligand>
</feature>
<feature type="binding site" evidence="1">
    <location>
        <begin position="14"/>
        <end position="19"/>
    </location>
    <ligand>
        <name>ATP</name>
        <dbReference type="ChEBI" id="CHEBI:30616"/>
    </ligand>
</feature>
<feature type="binding site" evidence="1">
    <location>
        <position position="54"/>
    </location>
    <ligand>
        <name>L-glutamine</name>
        <dbReference type="ChEBI" id="CHEBI:58359"/>
    </ligand>
</feature>
<feature type="binding site" evidence="1">
    <location>
        <position position="71"/>
    </location>
    <ligand>
        <name>ATP</name>
        <dbReference type="ChEBI" id="CHEBI:30616"/>
    </ligand>
</feature>
<feature type="binding site" evidence="1">
    <location>
        <position position="71"/>
    </location>
    <ligand>
        <name>Mg(2+)</name>
        <dbReference type="ChEBI" id="CHEBI:18420"/>
    </ligand>
</feature>
<feature type="binding site" evidence="1">
    <location>
        <position position="141"/>
    </location>
    <ligand>
        <name>Mg(2+)</name>
        <dbReference type="ChEBI" id="CHEBI:18420"/>
    </ligand>
</feature>
<feature type="binding site" evidence="1">
    <location>
        <begin position="148"/>
        <end position="150"/>
    </location>
    <ligand>
        <name>CTP</name>
        <dbReference type="ChEBI" id="CHEBI:37563"/>
        <note>allosteric inhibitor</note>
    </ligand>
</feature>
<feature type="binding site" evidence="1">
    <location>
        <begin position="188"/>
        <end position="193"/>
    </location>
    <ligand>
        <name>CTP</name>
        <dbReference type="ChEBI" id="CHEBI:37563"/>
        <note>allosteric inhibitor</note>
    </ligand>
</feature>
<feature type="binding site" evidence="1">
    <location>
        <begin position="188"/>
        <end position="193"/>
    </location>
    <ligand>
        <name>UTP</name>
        <dbReference type="ChEBI" id="CHEBI:46398"/>
    </ligand>
</feature>
<feature type="binding site" evidence="1">
    <location>
        <position position="224"/>
    </location>
    <ligand>
        <name>CTP</name>
        <dbReference type="ChEBI" id="CHEBI:37563"/>
        <note>allosteric inhibitor</note>
    </ligand>
</feature>
<feature type="binding site" evidence="1">
    <location>
        <position position="224"/>
    </location>
    <ligand>
        <name>UTP</name>
        <dbReference type="ChEBI" id="CHEBI:46398"/>
    </ligand>
</feature>
<feature type="binding site" evidence="1">
    <location>
        <position position="354"/>
    </location>
    <ligand>
        <name>L-glutamine</name>
        <dbReference type="ChEBI" id="CHEBI:58359"/>
    </ligand>
</feature>
<feature type="binding site" evidence="1">
    <location>
        <begin position="382"/>
        <end position="385"/>
    </location>
    <ligand>
        <name>L-glutamine</name>
        <dbReference type="ChEBI" id="CHEBI:58359"/>
    </ligand>
</feature>
<feature type="binding site" evidence="1">
    <location>
        <position position="405"/>
    </location>
    <ligand>
        <name>L-glutamine</name>
        <dbReference type="ChEBI" id="CHEBI:58359"/>
    </ligand>
</feature>
<feature type="binding site" evidence="1">
    <location>
        <position position="462"/>
    </location>
    <ligand>
        <name>L-glutamine</name>
        <dbReference type="ChEBI" id="CHEBI:58359"/>
    </ligand>
</feature>
<keyword id="KW-0067">ATP-binding</keyword>
<keyword id="KW-0315">Glutamine amidotransferase</keyword>
<keyword id="KW-0436">Ligase</keyword>
<keyword id="KW-0460">Magnesium</keyword>
<keyword id="KW-0479">Metal-binding</keyword>
<keyword id="KW-0547">Nucleotide-binding</keyword>
<keyword id="KW-0665">Pyrimidine biosynthesis</keyword>
<keyword id="KW-1185">Reference proteome</keyword>
<gene>
    <name evidence="1" type="primary">pyrG</name>
    <name type="ordered locus">Mfl648</name>
</gene>